<organism>
    <name type="scientific">Drosophila hydei</name>
    <name type="common">Fruit fly</name>
    <dbReference type="NCBI Taxonomy" id="7224"/>
    <lineage>
        <taxon>Eukaryota</taxon>
        <taxon>Metazoa</taxon>
        <taxon>Ecdysozoa</taxon>
        <taxon>Arthropoda</taxon>
        <taxon>Hexapoda</taxon>
        <taxon>Insecta</taxon>
        <taxon>Pterygota</taxon>
        <taxon>Neoptera</taxon>
        <taxon>Endopterygota</taxon>
        <taxon>Diptera</taxon>
        <taxon>Brachycera</taxon>
        <taxon>Muscomorpha</taxon>
        <taxon>Ephydroidea</taxon>
        <taxon>Drosophilidae</taxon>
        <taxon>Drosophila</taxon>
    </lineage>
</organism>
<keyword id="KW-0158">Chromosome</keyword>
<keyword id="KW-0238">DNA-binding</keyword>
<keyword id="KW-0539">Nucleus</keyword>
<proteinExistence type="inferred from homology"/>
<name>H1_DROHY</name>
<feature type="chain" id="PRO_0000195962" description="Histone H1">
    <location>
        <begin position="1"/>
        <end position="249"/>
    </location>
</feature>
<feature type="domain" description="H15" evidence="1">
    <location>
        <begin position="45"/>
        <end position="119"/>
    </location>
</feature>
<feature type="region of interest" description="Disordered" evidence="2">
    <location>
        <begin position="1"/>
        <end position="53"/>
    </location>
</feature>
<feature type="region of interest" description="Disordered" evidence="2">
    <location>
        <begin position="105"/>
        <end position="249"/>
    </location>
</feature>
<feature type="compositionally biased region" description="Low complexity" evidence="2">
    <location>
        <begin position="1"/>
        <end position="19"/>
    </location>
</feature>
<feature type="compositionally biased region" description="Low complexity" evidence="2">
    <location>
        <begin position="27"/>
        <end position="43"/>
    </location>
</feature>
<feature type="compositionally biased region" description="Basic and acidic residues" evidence="2">
    <location>
        <begin position="121"/>
        <end position="134"/>
    </location>
</feature>
<feature type="compositionally biased region" description="Basic residues" evidence="2">
    <location>
        <begin position="146"/>
        <end position="158"/>
    </location>
</feature>
<feature type="compositionally biased region" description="Basic and acidic residues" evidence="2">
    <location>
        <begin position="173"/>
        <end position="190"/>
    </location>
</feature>
<feature type="compositionally biased region" description="Low complexity" evidence="2">
    <location>
        <begin position="195"/>
        <end position="233"/>
    </location>
</feature>
<feature type="compositionally biased region" description="Basic residues" evidence="2">
    <location>
        <begin position="234"/>
        <end position="249"/>
    </location>
</feature>
<feature type="sequence conflict" description="In Ref. 2; CAA36804." evidence="3" ref="2">
    <original>A</original>
    <variation>P</variation>
    <location>
        <position position="208"/>
    </location>
</feature>
<dbReference type="EMBL" id="X17072">
    <property type="protein sequence ID" value="CAA34918.1"/>
    <property type="molecule type" value="Genomic_DNA"/>
</dbReference>
<dbReference type="EMBL" id="X52576">
    <property type="protein sequence ID" value="CAA36804.1"/>
    <property type="molecule type" value="Genomic_DNA"/>
</dbReference>
<dbReference type="PIR" id="S21935">
    <property type="entry name" value="S21935"/>
</dbReference>
<dbReference type="SMR" id="P17268"/>
<dbReference type="EnsemblMetazoa" id="XM_030223110.1">
    <property type="protein sequence ID" value="XP_030078970.1"/>
    <property type="gene ID" value="LOC115482860"/>
</dbReference>
<dbReference type="EnsemblMetazoa" id="XM_030223135.1">
    <property type="protein sequence ID" value="XP_030078995.1"/>
    <property type="gene ID" value="LOC115482886"/>
</dbReference>
<dbReference type="EnsemblMetazoa" id="XM_030223136.1">
    <property type="protein sequence ID" value="XP_030078996.1"/>
    <property type="gene ID" value="LOC115482887"/>
</dbReference>
<dbReference type="EnsemblMetazoa" id="XM_030224467.1">
    <property type="protein sequence ID" value="XP_030080327.1"/>
    <property type="gene ID" value="LOC115483206"/>
</dbReference>
<dbReference type="EnsemblMetazoa" id="XM_030224574.1">
    <property type="protein sequence ID" value="XP_030080434.1"/>
    <property type="gene ID" value="LOC115483230"/>
</dbReference>
<dbReference type="EnsemblMetazoa" id="XM_030224612.1">
    <property type="protein sequence ID" value="XP_030080472.1"/>
    <property type="gene ID" value="LOC115483267"/>
</dbReference>
<dbReference type="EnsemblMetazoa" id="XM_030224618.1">
    <property type="protein sequence ID" value="XP_030080478.1"/>
    <property type="gene ID" value="LOC115483275"/>
</dbReference>
<dbReference type="EnsemblMetazoa" id="XM_030224686.1">
    <property type="protein sequence ID" value="XP_030080546.1"/>
    <property type="gene ID" value="LOC115483309"/>
</dbReference>
<dbReference type="OMA" id="CRIDVQT"/>
<dbReference type="OrthoDB" id="8251629at2759"/>
<dbReference type="Proteomes" id="UP000504633">
    <property type="component" value="Unplaced"/>
</dbReference>
<dbReference type="GO" id="GO:0000786">
    <property type="term" value="C:nucleosome"/>
    <property type="evidence" value="ECO:0007669"/>
    <property type="project" value="InterPro"/>
</dbReference>
<dbReference type="GO" id="GO:0005634">
    <property type="term" value="C:nucleus"/>
    <property type="evidence" value="ECO:0007669"/>
    <property type="project" value="UniProtKB-SubCell"/>
</dbReference>
<dbReference type="GO" id="GO:0003690">
    <property type="term" value="F:double-stranded DNA binding"/>
    <property type="evidence" value="ECO:0007669"/>
    <property type="project" value="TreeGrafter"/>
</dbReference>
<dbReference type="GO" id="GO:0031492">
    <property type="term" value="F:nucleosomal DNA binding"/>
    <property type="evidence" value="ECO:0007669"/>
    <property type="project" value="TreeGrafter"/>
</dbReference>
<dbReference type="GO" id="GO:0030527">
    <property type="term" value="F:structural constituent of chromatin"/>
    <property type="evidence" value="ECO:0007669"/>
    <property type="project" value="InterPro"/>
</dbReference>
<dbReference type="GO" id="GO:0030261">
    <property type="term" value="P:chromosome condensation"/>
    <property type="evidence" value="ECO:0007669"/>
    <property type="project" value="TreeGrafter"/>
</dbReference>
<dbReference type="GO" id="GO:0045910">
    <property type="term" value="P:negative regulation of DNA recombination"/>
    <property type="evidence" value="ECO:0007669"/>
    <property type="project" value="TreeGrafter"/>
</dbReference>
<dbReference type="GO" id="GO:0006334">
    <property type="term" value="P:nucleosome assembly"/>
    <property type="evidence" value="ECO:0007669"/>
    <property type="project" value="InterPro"/>
</dbReference>
<dbReference type="CDD" id="cd00073">
    <property type="entry name" value="H15"/>
    <property type="match status" value="1"/>
</dbReference>
<dbReference type="FunFam" id="1.10.10.10:FF:000140">
    <property type="entry name" value="Histone H1.0"/>
    <property type="match status" value="1"/>
</dbReference>
<dbReference type="Gene3D" id="1.10.10.10">
    <property type="entry name" value="Winged helix-like DNA-binding domain superfamily/Winged helix DNA-binding domain"/>
    <property type="match status" value="1"/>
</dbReference>
<dbReference type="InterPro" id="IPR005819">
    <property type="entry name" value="H1/H5"/>
</dbReference>
<dbReference type="InterPro" id="IPR005818">
    <property type="entry name" value="Histone_H1/H5_H15"/>
</dbReference>
<dbReference type="InterPro" id="IPR036388">
    <property type="entry name" value="WH-like_DNA-bd_sf"/>
</dbReference>
<dbReference type="InterPro" id="IPR036390">
    <property type="entry name" value="WH_DNA-bd_sf"/>
</dbReference>
<dbReference type="PANTHER" id="PTHR11467:SF20">
    <property type="entry name" value="H15 DOMAIN-CONTAINING PROTEIN-RELATED"/>
    <property type="match status" value="1"/>
</dbReference>
<dbReference type="PANTHER" id="PTHR11467">
    <property type="entry name" value="HISTONE H1"/>
    <property type="match status" value="1"/>
</dbReference>
<dbReference type="Pfam" id="PF00538">
    <property type="entry name" value="Linker_histone"/>
    <property type="match status" value="1"/>
</dbReference>
<dbReference type="PRINTS" id="PR00624">
    <property type="entry name" value="HISTONEH5"/>
</dbReference>
<dbReference type="SMART" id="SM00526">
    <property type="entry name" value="H15"/>
    <property type="match status" value="1"/>
</dbReference>
<dbReference type="SUPFAM" id="SSF46785">
    <property type="entry name" value="Winged helix' DNA-binding domain"/>
    <property type="match status" value="1"/>
</dbReference>
<dbReference type="PROSITE" id="PS51504">
    <property type="entry name" value="H15"/>
    <property type="match status" value="1"/>
</dbReference>
<reference key="1">
    <citation type="journal article" date="1990" name="Nucleic Acids Res.">
        <title>Isolation and characterization of a Drosophila hydei histone DNA repeat unit.</title>
        <authorList>
            <person name="Kremer H."/>
            <person name="Hennig W."/>
        </authorList>
    </citation>
    <scope>NUCLEOTIDE SEQUENCE [GENOMIC DNA]</scope>
</reference>
<reference key="2">
    <citation type="submission" date="1990-04" db="EMBL/GenBank/DDBJ databases">
        <authorList>
            <person name="Strausbaugh L.D."/>
            <person name="Fitch D.H.A."/>
            <person name="Barrett V."/>
        </authorList>
    </citation>
    <scope>NUCLEOTIDE SEQUENCE [GENOMIC DNA]</scope>
</reference>
<protein>
    <recommendedName>
        <fullName>Histone H1</fullName>
    </recommendedName>
</protein>
<sequence length="249" mass="25747">MSDSVVAVSASPVTPQTASAEKKVAAKKPASASASKAKKTTAPPTHPPTQQMVDASIQNLKERGGSSLLAIKKYISATYKCDAQKLAPFIKKYLKNSVANGKLIQTKGKGASGSFKLSASSKKEPKPKVSSVEKKSKKVTSSAAAAKKKTISATKKPKGVADKKLSKAVVTKKSVDKKKAEKAKAKDAKKVGTIKAKPTTAKAKSSAAKPKTPKPKTTSAKPKKVVAAASPKKAAAKKPKAKTASATKK</sequence>
<gene>
    <name type="primary">His1</name>
</gene>
<accession>P17268</accession>
<comment type="function">
    <text>Histones H1 are necessary for the condensation of nucleosome chains into higher-order structures.</text>
</comment>
<comment type="subcellular location">
    <subcellularLocation>
        <location>Nucleus</location>
    </subcellularLocation>
    <subcellularLocation>
        <location>Chromosome</location>
    </subcellularLocation>
</comment>
<comment type="similarity">
    <text evidence="1">Belongs to the histone H1/H5 family.</text>
</comment>
<evidence type="ECO:0000255" key="1">
    <source>
        <dbReference type="PROSITE-ProRule" id="PRU00837"/>
    </source>
</evidence>
<evidence type="ECO:0000256" key="2">
    <source>
        <dbReference type="SAM" id="MobiDB-lite"/>
    </source>
</evidence>
<evidence type="ECO:0000305" key="3"/>